<sequence>MNAIPLEHGLAVAGVLFCLGLVGLMVRRNILFVLMSLEIMMNAAALAFVVAGSRWGQPDGQVMFILVISLAAAEASIGLAILMQLYRRFHTLDIDAASEMRG</sequence>
<gene>
    <name evidence="1" type="primary">nuoK</name>
    <name type="ordered locus">Psyr_3206</name>
</gene>
<proteinExistence type="inferred from homology"/>
<keyword id="KW-0997">Cell inner membrane</keyword>
<keyword id="KW-1003">Cell membrane</keyword>
<keyword id="KW-0472">Membrane</keyword>
<keyword id="KW-0520">NAD</keyword>
<keyword id="KW-0874">Quinone</keyword>
<keyword id="KW-1278">Translocase</keyword>
<keyword id="KW-0812">Transmembrane</keyword>
<keyword id="KW-1133">Transmembrane helix</keyword>
<keyword id="KW-0813">Transport</keyword>
<keyword id="KW-0830">Ubiquinone</keyword>
<protein>
    <recommendedName>
        <fullName evidence="1">NADH-quinone oxidoreductase subunit K</fullName>
        <ecNumber evidence="1">7.1.1.-</ecNumber>
    </recommendedName>
    <alternativeName>
        <fullName evidence="1">NADH dehydrogenase I subunit K</fullName>
    </alternativeName>
    <alternativeName>
        <fullName evidence="1">NDH-1 subunit K</fullName>
    </alternativeName>
</protein>
<dbReference type="EC" id="7.1.1.-" evidence="1"/>
<dbReference type="EMBL" id="CP000075">
    <property type="protein sequence ID" value="AAY38238.1"/>
    <property type="molecule type" value="Genomic_DNA"/>
</dbReference>
<dbReference type="RefSeq" id="WP_003317980.1">
    <property type="nucleotide sequence ID" value="NC_007005.1"/>
</dbReference>
<dbReference type="RefSeq" id="YP_236276.1">
    <property type="nucleotide sequence ID" value="NC_007005.1"/>
</dbReference>
<dbReference type="SMR" id="Q4ZRI4"/>
<dbReference type="STRING" id="205918.Psyr_3206"/>
<dbReference type="GeneID" id="77279018"/>
<dbReference type="KEGG" id="psb:Psyr_3206"/>
<dbReference type="PATRIC" id="fig|205918.7.peg.3273"/>
<dbReference type="eggNOG" id="COG0713">
    <property type="taxonomic scope" value="Bacteria"/>
</dbReference>
<dbReference type="HOGENOM" id="CLU_144724_0_1_6"/>
<dbReference type="OrthoDB" id="9801357at2"/>
<dbReference type="Proteomes" id="UP000000426">
    <property type="component" value="Chromosome"/>
</dbReference>
<dbReference type="GO" id="GO:0030964">
    <property type="term" value="C:NADH dehydrogenase complex"/>
    <property type="evidence" value="ECO:0007669"/>
    <property type="project" value="TreeGrafter"/>
</dbReference>
<dbReference type="GO" id="GO:0005886">
    <property type="term" value="C:plasma membrane"/>
    <property type="evidence" value="ECO:0007669"/>
    <property type="project" value="UniProtKB-SubCell"/>
</dbReference>
<dbReference type="GO" id="GO:0050136">
    <property type="term" value="F:NADH:ubiquinone reductase (non-electrogenic) activity"/>
    <property type="evidence" value="ECO:0007669"/>
    <property type="project" value="UniProtKB-UniRule"/>
</dbReference>
<dbReference type="GO" id="GO:0048038">
    <property type="term" value="F:quinone binding"/>
    <property type="evidence" value="ECO:0007669"/>
    <property type="project" value="UniProtKB-KW"/>
</dbReference>
<dbReference type="GO" id="GO:0042773">
    <property type="term" value="P:ATP synthesis coupled electron transport"/>
    <property type="evidence" value="ECO:0007669"/>
    <property type="project" value="InterPro"/>
</dbReference>
<dbReference type="FunFam" id="1.10.287.3510:FF:000001">
    <property type="entry name" value="NADH-quinone oxidoreductase subunit K"/>
    <property type="match status" value="1"/>
</dbReference>
<dbReference type="Gene3D" id="1.10.287.3510">
    <property type="match status" value="1"/>
</dbReference>
<dbReference type="HAMAP" id="MF_01456">
    <property type="entry name" value="NDH1_NuoK"/>
    <property type="match status" value="1"/>
</dbReference>
<dbReference type="InterPro" id="IPR001133">
    <property type="entry name" value="NADH_UbQ_OxRdtase_chain4L/K"/>
</dbReference>
<dbReference type="InterPro" id="IPR039428">
    <property type="entry name" value="NUOK/Mnh_C1-like"/>
</dbReference>
<dbReference type="NCBIfam" id="NF004319">
    <property type="entry name" value="PRK05715.1-1"/>
    <property type="match status" value="1"/>
</dbReference>
<dbReference type="NCBIfam" id="NF004320">
    <property type="entry name" value="PRK05715.1-2"/>
    <property type="match status" value="1"/>
</dbReference>
<dbReference type="PANTHER" id="PTHR11434:SF16">
    <property type="entry name" value="NADH-UBIQUINONE OXIDOREDUCTASE CHAIN 4L"/>
    <property type="match status" value="1"/>
</dbReference>
<dbReference type="PANTHER" id="PTHR11434">
    <property type="entry name" value="NADH-UBIQUINONE OXIDOREDUCTASE SUBUNIT ND4L"/>
    <property type="match status" value="1"/>
</dbReference>
<dbReference type="Pfam" id="PF00420">
    <property type="entry name" value="Oxidored_q2"/>
    <property type="match status" value="1"/>
</dbReference>
<evidence type="ECO:0000255" key="1">
    <source>
        <dbReference type="HAMAP-Rule" id="MF_01456"/>
    </source>
</evidence>
<comment type="function">
    <text evidence="1">NDH-1 shuttles electrons from NADH, via FMN and iron-sulfur (Fe-S) centers, to quinones in the respiratory chain. The immediate electron acceptor for the enzyme in this species is believed to be ubiquinone. Couples the redox reaction to proton translocation (for every two electrons transferred, four hydrogen ions are translocated across the cytoplasmic membrane), and thus conserves the redox energy in a proton gradient.</text>
</comment>
<comment type="catalytic activity">
    <reaction evidence="1">
        <text>a quinone + NADH + 5 H(+)(in) = a quinol + NAD(+) + 4 H(+)(out)</text>
        <dbReference type="Rhea" id="RHEA:57888"/>
        <dbReference type="ChEBI" id="CHEBI:15378"/>
        <dbReference type="ChEBI" id="CHEBI:24646"/>
        <dbReference type="ChEBI" id="CHEBI:57540"/>
        <dbReference type="ChEBI" id="CHEBI:57945"/>
        <dbReference type="ChEBI" id="CHEBI:132124"/>
    </reaction>
</comment>
<comment type="subunit">
    <text evidence="1">NDH-1 is composed of 13 different subunits. Subunits NuoA, H, J, K, L, M, N constitute the membrane sector of the complex.</text>
</comment>
<comment type="subcellular location">
    <subcellularLocation>
        <location evidence="1">Cell inner membrane</location>
        <topology evidence="1">Multi-pass membrane protein</topology>
    </subcellularLocation>
</comment>
<comment type="similarity">
    <text evidence="1">Belongs to the complex I subunit 4L family.</text>
</comment>
<accession>Q4ZRI4</accession>
<feature type="chain" id="PRO_0000390176" description="NADH-quinone oxidoreductase subunit K">
    <location>
        <begin position="1"/>
        <end position="102"/>
    </location>
</feature>
<feature type="transmembrane region" description="Helical" evidence="1">
    <location>
        <begin position="6"/>
        <end position="26"/>
    </location>
</feature>
<feature type="transmembrane region" description="Helical" evidence="1">
    <location>
        <begin position="30"/>
        <end position="50"/>
    </location>
</feature>
<feature type="transmembrane region" description="Helical" evidence="1">
    <location>
        <begin position="62"/>
        <end position="82"/>
    </location>
</feature>
<reference key="1">
    <citation type="journal article" date="2005" name="Proc. Natl. Acad. Sci. U.S.A.">
        <title>Comparison of the complete genome sequences of Pseudomonas syringae pv. syringae B728a and pv. tomato DC3000.</title>
        <authorList>
            <person name="Feil H."/>
            <person name="Feil W.S."/>
            <person name="Chain P."/>
            <person name="Larimer F."/>
            <person name="Dibartolo G."/>
            <person name="Copeland A."/>
            <person name="Lykidis A."/>
            <person name="Trong S."/>
            <person name="Nolan M."/>
            <person name="Goltsman E."/>
            <person name="Thiel J."/>
            <person name="Malfatti S."/>
            <person name="Loper J.E."/>
            <person name="Lapidus A."/>
            <person name="Detter J.C."/>
            <person name="Land M."/>
            <person name="Richardson P.M."/>
            <person name="Kyrpides N.C."/>
            <person name="Ivanova N."/>
            <person name="Lindow S.E."/>
        </authorList>
    </citation>
    <scope>NUCLEOTIDE SEQUENCE [LARGE SCALE GENOMIC DNA]</scope>
    <source>
        <strain>B728a</strain>
    </source>
</reference>
<organism>
    <name type="scientific">Pseudomonas syringae pv. syringae (strain B728a)</name>
    <dbReference type="NCBI Taxonomy" id="205918"/>
    <lineage>
        <taxon>Bacteria</taxon>
        <taxon>Pseudomonadati</taxon>
        <taxon>Pseudomonadota</taxon>
        <taxon>Gammaproteobacteria</taxon>
        <taxon>Pseudomonadales</taxon>
        <taxon>Pseudomonadaceae</taxon>
        <taxon>Pseudomonas</taxon>
        <taxon>Pseudomonas syringae</taxon>
    </lineage>
</organism>
<name>NUOK_PSEU2</name>